<protein>
    <recommendedName>
        <fullName>Dirigent protein 14</fullName>
        <shortName>AtDIR14</shortName>
    </recommendedName>
</protein>
<feature type="signal peptide" evidence="2">
    <location>
        <begin position="1"/>
        <end position="20"/>
    </location>
</feature>
<feature type="chain" id="PRO_0000422845" description="Dirigent protein 14">
    <location>
        <begin position="21"/>
        <end position="184"/>
    </location>
</feature>
<feature type="glycosylation site" description="N-linked (GlcNAc...) asparagine" evidence="2">
    <location>
        <position position="55"/>
    </location>
</feature>
<feature type="glycosylation site" description="N-linked (GlcNAc...) asparagine" evidence="2">
    <location>
        <position position="119"/>
    </location>
</feature>
<feature type="disulfide bond" evidence="1">
    <location>
        <begin position="36"/>
        <end position="182"/>
    </location>
</feature>
<name>DIR14_ARATH</name>
<reference key="1">
    <citation type="journal article" date="1999" name="Nature">
        <title>Sequence and analysis of chromosome 4 of the plant Arabidopsis thaliana.</title>
        <authorList>
            <person name="Mayer K.F.X."/>
            <person name="Schueller C."/>
            <person name="Wambutt R."/>
            <person name="Murphy G."/>
            <person name="Volckaert G."/>
            <person name="Pohl T."/>
            <person name="Duesterhoeft A."/>
            <person name="Stiekema W."/>
            <person name="Entian K.-D."/>
            <person name="Terryn N."/>
            <person name="Harris B."/>
            <person name="Ansorge W."/>
            <person name="Brandt P."/>
            <person name="Grivell L.A."/>
            <person name="Rieger M."/>
            <person name="Weichselgartner M."/>
            <person name="de Simone V."/>
            <person name="Obermaier B."/>
            <person name="Mache R."/>
            <person name="Mueller M."/>
            <person name="Kreis M."/>
            <person name="Delseny M."/>
            <person name="Puigdomenech P."/>
            <person name="Watson M."/>
            <person name="Schmidtheini T."/>
            <person name="Reichert B."/>
            <person name="Portetelle D."/>
            <person name="Perez-Alonso M."/>
            <person name="Boutry M."/>
            <person name="Bancroft I."/>
            <person name="Vos P."/>
            <person name="Hoheisel J."/>
            <person name="Zimmermann W."/>
            <person name="Wedler H."/>
            <person name="Ridley P."/>
            <person name="Langham S.-A."/>
            <person name="McCullagh B."/>
            <person name="Bilham L."/>
            <person name="Robben J."/>
            <person name="van der Schueren J."/>
            <person name="Grymonprez B."/>
            <person name="Chuang Y.-J."/>
            <person name="Vandenbussche F."/>
            <person name="Braeken M."/>
            <person name="Weltjens I."/>
            <person name="Voet M."/>
            <person name="Bastiaens I."/>
            <person name="Aert R."/>
            <person name="Defoor E."/>
            <person name="Weitzenegger T."/>
            <person name="Bothe G."/>
            <person name="Ramsperger U."/>
            <person name="Hilbert H."/>
            <person name="Braun M."/>
            <person name="Holzer E."/>
            <person name="Brandt A."/>
            <person name="Peters S."/>
            <person name="van Staveren M."/>
            <person name="Dirkse W."/>
            <person name="Mooijman P."/>
            <person name="Klein Lankhorst R."/>
            <person name="Rose M."/>
            <person name="Hauf J."/>
            <person name="Koetter P."/>
            <person name="Berneiser S."/>
            <person name="Hempel S."/>
            <person name="Feldpausch M."/>
            <person name="Lamberth S."/>
            <person name="Van den Daele H."/>
            <person name="De Keyser A."/>
            <person name="Buysshaert C."/>
            <person name="Gielen J."/>
            <person name="Villarroel R."/>
            <person name="De Clercq R."/>
            <person name="van Montagu M."/>
            <person name="Rogers J."/>
            <person name="Cronin A."/>
            <person name="Quail M.A."/>
            <person name="Bray-Allen S."/>
            <person name="Clark L."/>
            <person name="Doggett J."/>
            <person name="Hall S."/>
            <person name="Kay M."/>
            <person name="Lennard N."/>
            <person name="McLay K."/>
            <person name="Mayes R."/>
            <person name="Pettett A."/>
            <person name="Rajandream M.A."/>
            <person name="Lyne M."/>
            <person name="Benes V."/>
            <person name="Rechmann S."/>
            <person name="Borkova D."/>
            <person name="Bloecker H."/>
            <person name="Scharfe M."/>
            <person name="Grimm M."/>
            <person name="Loehnert T.-H."/>
            <person name="Dose S."/>
            <person name="de Haan M."/>
            <person name="Maarse A.C."/>
            <person name="Schaefer M."/>
            <person name="Mueller-Auer S."/>
            <person name="Gabel C."/>
            <person name="Fuchs M."/>
            <person name="Fartmann B."/>
            <person name="Granderath K."/>
            <person name="Dauner D."/>
            <person name="Herzl A."/>
            <person name="Neumann S."/>
            <person name="Argiriou A."/>
            <person name="Vitale D."/>
            <person name="Liguori R."/>
            <person name="Piravandi E."/>
            <person name="Massenet O."/>
            <person name="Quigley F."/>
            <person name="Clabauld G."/>
            <person name="Muendlein A."/>
            <person name="Felber R."/>
            <person name="Schnabl S."/>
            <person name="Hiller R."/>
            <person name="Schmidt W."/>
            <person name="Lecharny A."/>
            <person name="Aubourg S."/>
            <person name="Chefdor F."/>
            <person name="Cooke R."/>
            <person name="Berger C."/>
            <person name="Monfort A."/>
            <person name="Casacuberta E."/>
            <person name="Gibbons T."/>
            <person name="Weber N."/>
            <person name="Vandenbol M."/>
            <person name="Bargues M."/>
            <person name="Terol J."/>
            <person name="Torres A."/>
            <person name="Perez-Perez A."/>
            <person name="Purnelle B."/>
            <person name="Bent E."/>
            <person name="Johnson S."/>
            <person name="Tacon D."/>
            <person name="Jesse T."/>
            <person name="Heijnen L."/>
            <person name="Schwarz S."/>
            <person name="Scholler P."/>
            <person name="Heber S."/>
            <person name="Francs P."/>
            <person name="Bielke C."/>
            <person name="Frishman D."/>
            <person name="Haase D."/>
            <person name="Lemcke K."/>
            <person name="Mewes H.-W."/>
            <person name="Stocker S."/>
            <person name="Zaccaria P."/>
            <person name="Bevan M."/>
            <person name="Wilson R.K."/>
            <person name="de la Bastide M."/>
            <person name="Habermann K."/>
            <person name="Parnell L."/>
            <person name="Dedhia N."/>
            <person name="Gnoj L."/>
            <person name="Schutz K."/>
            <person name="Huang E."/>
            <person name="Spiegel L."/>
            <person name="Sekhon M."/>
            <person name="Murray J."/>
            <person name="Sheet P."/>
            <person name="Cordes M."/>
            <person name="Abu-Threideh J."/>
            <person name="Stoneking T."/>
            <person name="Kalicki J."/>
            <person name="Graves T."/>
            <person name="Harmon G."/>
            <person name="Edwards J."/>
            <person name="Latreille P."/>
            <person name="Courtney L."/>
            <person name="Cloud J."/>
            <person name="Abbott A."/>
            <person name="Scott K."/>
            <person name="Johnson D."/>
            <person name="Minx P."/>
            <person name="Bentley D."/>
            <person name="Fulton B."/>
            <person name="Miller N."/>
            <person name="Greco T."/>
            <person name="Kemp K."/>
            <person name="Kramer J."/>
            <person name="Fulton L."/>
            <person name="Mardis E."/>
            <person name="Dante M."/>
            <person name="Pepin K."/>
            <person name="Hillier L.W."/>
            <person name="Nelson J."/>
            <person name="Spieth J."/>
            <person name="Ryan E."/>
            <person name="Andrews S."/>
            <person name="Geisel C."/>
            <person name="Layman D."/>
            <person name="Du H."/>
            <person name="Ali J."/>
            <person name="Berghoff A."/>
            <person name="Jones K."/>
            <person name="Drone K."/>
            <person name="Cotton M."/>
            <person name="Joshu C."/>
            <person name="Antonoiu B."/>
            <person name="Zidanic M."/>
            <person name="Strong C."/>
            <person name="Sun H."/>
            <person name="Lamar B."/>
            <person name="Yordan C."/>
            <person name="Ma P."/>
            <person name="Zhong J."/>
            <person name="Preston R."/>
            <person name="Vil D."/>
            <person name="Shekher M."/>
            <person name="Matero A."/>
            <person name="Shah R."/>
            <person name="Swaby I.K."/>
            <person name="O'Shaughnessy A."/>
            <person name="Rodriguez M."/>
            <person name="Hoffman J."/>
            <person name="Till S."/>
            <person name="Granat S."/>
            <person name="Shohdy N."/>
            <person name="Hasegawa A."/>
            <person name="Hameed A."/>
            <person name="Lodhi M."/>
            <person name="Johnson A."/>
            <person name="Chen E."/>
            <person name="Marra M.A."/>
            <person name="Martienssen R."/>
            <person name="McCombie W.R."/>
        </authorList>
    </citation>
    <scope>NUCLEOTIDE SEQUENCE [LARGE SCALE GENOMIC DNA]</scope>
    <source>
        <strain>cv. Columbia</strain>
    </source>
</reference>
<reference key="2">
    <citation type="journal article" date="2017" name="Plant J.">
        <title>Araport11: a complete reannotation of the Arabidopsis thaliana reference genome.</title>
        <authorList>
            <person name="Cheng C.Y."/>
            <person name="Krishnakumar V."/>
            <person name="Chan A.P."/>
            <person name="Thibaud-Nissen F."/>
            <person name="Schobel S."/>
            <person name="Town C.D."/>
        </authorList>
    </citation>
    <scope>GENOME REANNOTATION</scope>
    <source>
        <strain>cv. Columbia</strain>
    </source>
</reference>
<reference key="3">
    <citation type="submission" date="2004-09" db="EMBL/GenBank/DDBJ databases">
        <title>Arabidopsis thaliana At4g11210 mRNA sequence.</title>
        <authorList>
            <consortium name="Center for Eukaryotic Structural Genomics"/>
        </authorList>
    </citation>
    <scope>NUCLEOTIDE SEQUENCE [LARGE SCALE MRNA] OF 26-184</scope>
</reference>
<reference key="4">
    <citation type="journal article" date="2007" name="Phytochemistry">
        <title>Dirigent proteins in conifer defense II: Extended gene discovery, phylogeny, and constitutive and stress-induced gene expression in spruce (Picea spp.).</title>
        <authorList>
            <person name="Ralph S.G."/>
            <person name="Jancsik S."/>
            <person name="Bohlmann J."/>
        </authorList>
    </citation>
    <scope>GENE FAMILY</scope>
    <scope>NOMENCLATURE</scope>
</reference>
<accession>Q9T019</accession>
<comment type="function">
    <text evidence="1">Dirigent proteins impart stereoselectivity on the phenoxy radical-coupling reaction, yielding optically active lignans from two molecules of coniferyl alcohol in the biosynthesis of lignans, flavonolignans, and alkaloids and thus plays a central role in plant secondary metabolism.</text>
</comment>
<comment type="subunit">
    <text evidence="1">Homodimer.</text>
</comment>
<comment type="subcellular location">
    <subcellularLocation>
        <location evidence="1">Secreted</location>
        <location evidence="1">Extracellular space</location>
        <location evidence="1">Apoplast</location>
    </subcellularLocation>
</comment>
<comment type="similarity">
    <text evidence="3">Belongs to the plant dirigent protein family.</text>
</comment>
<organism>
    <name type="scientific">Arabidopsis thaliana</name>
    <name type="common">Mouse-ear cress</name>
    <dbReference type="NCBI Taxonomy" id="3702"/>
    <lineage>
        <taxon>Eukaryota</taxon>
        <taxon>Viridiplantae</taxon>
        <taxon>Streptophyta</taxon>
        <taxon>Embryophyta</taxon>
        <taxon>Tracheophyta</taxon>
        <taxon>Spermatophyta</taxon>
        <taxon>Magnoliopsida</taxon>
        <taxon>eudicotyledons</taxon>
        <taxon>Gunneridae</taxon>
        <taxon>Pentapetalae</taxon>
        <taxon>rosids</taxon>
        <taxon>malvids</taxon>
        <taxon>Brassicales</taxon>
        <taxon>Brassicaceae</taxon>
        <taxon>Camelineae</taxon>
        <taxon>Arabidopsis</taxon>
    </lineage>
</organism>
<gene>
    <name type="primary">DIR14</name>
    <name type="synonym">DIR16</name>
    <name type="ordered locus">At4g11210</name>
    <name type="ORF">F8L21.1</name>
</gene>
<proteinExistence type="evidence at transcript level"/>
<evidence type="ECO:0000250" key="1"/>
<evidence type="ECO:0000255" key="2"/>
<evidence type="ECO:0000305" key="3"/>
<sequence>MANQIYLFSLICLSVLLCQSYTVSSFQKSLDLAKPCKRFVLHLHDIAYDGDNAANATSAAIVNPLGLGDFSFGKFVIMDDPVTMDQNYLSKPVARVQGFFCYHGKATYDAWIAWTVVFNSTQHKGAFTIMGENPFMEPTRDLPIVGGTGDFIMTRGIATLTTDHIDGSKYFRVKLDIKLYECYH</sequence>
<keyword id="KW-0052">Apoplast</keyword>
<keyword id="KW-1015">Disulfide bond</keyword>
<keyword id="KW-0325">Glycoprotein</keyword>
<keyword id="KW-1185">Reference proteome</keyword>
<keyword id="KW-0964">Secreted</keyword>
<keyword id="KW-0732">Signal</keyword>
<dbReference type="EMBL" id="AL049876">
    <property type="protein sequence ID" value="CAB43056.1"/>
    <property type="molecule type" value="Genomic_DNA"/>
</dbReference>
<dbReference type="EMBL" id="AL161531">
    <property type="protein sequence ID" value="CAB81222.1"/>
    <property type="molecule type" value="Genomic_DNA"/>
</dbReference>
<dbReference type="EMBL" id="CP002687">
    <property type="protein sequence ID" value="AEE82984.1"/>
    <property type="molecule type" value="Genomic_DNA"/>
</dbReference>
<dbReference type="EMBL" id="BT015626">
    <property type="status" value="NOT_ANNOTATED_CDS"/>
    <property type="molecule type" value="mRNA"/>
</dbReference>
<dbReference type="PIR" id="T08200">
    <property type="entry name" value="T08200"/>
</dbReference>
<dbReference type="RefSeq" id="NP_192860.1">
    <property type="nucleotide sequence ID" value="NM_117192.2"/>
</dbReference>
<dbReference type="SMR" id="Q9T019"/>
<dbReference type="FunCoup" id="Q9T019">
    <property type="interactions" value="58"/>
</dbReference>
<dbReference type="STRING" id="3702.Q9T019"/>
<dbReference type="GlyCosmos" id="Q9T019">
    <property type="glycosylation" value="2 sites, No reported glycans"/>
</dbReference>
<dbReference type="GlyGen" id="Q9T019">
    <property type="glycosylation" value="2 sites"/>
</dbReference>
<dbReference type="PaxDb" id="3702-AT4G11210.1"/>
<dbReference type="ProteomicsDB" id="224119"/>
<dbReference type="DNASU" id="826723"/>
<dbReference type="EnsemblPlants" id="AT4G11210.1">
    <property type="protein sequence ID" value="AT4G11210.1"/>
    <property type="gene ID" value="AT4G11210"/>
</dbReference>
<dbReference type="GeneID" id="826723"/>
<dbReference type="Gramene" id="AT4G11210.1">
    <property type="protein sequence ID" value="AT4G11210.1"/>
    <property type="gene ID" value="AT4G11210"/>
</dbReference>
<dbReference type="KEGG" id="ath:AT4G11210"/>
<dbReference type="Araport" id="AT4G11210"/>
<dbReference type="TAIR" id="AT4G11210"/>
<dbReference type="eggNOG" id="ENOG502RXV9">
    <property type="taxonomic scope" value="Eukaryota"/>
</dbReference>
<dbReference type="HOGENOM" id="CLU_087111_0_0_1"/>
<dbReference type="InParanoid" id="Q9T019"/>
<dbReference type="OMA" id="KGAFTIM"/>
<dbReference type="PhylomeDB" id="Q9T019"/>
<dbReference type="PRO" id="PR:Q9T019"/>
<dbReference type="Proteomes" id="UP000006548">
    <property type="component" value="Chromosome 4"/>
</dbReference>
<dbReference type="ExpressionAtlas" id="Q9T019">
    <property type="expression patterns" value="baseline and differential"/>
</dbReference>
<dbReference type="GO" id="GO:0048046">
    <property type="term" value="C:apoplast"/>
    <property type="evidence" value="ECO:0007669"/>
    <property type="project" value="UniProtKB-SubCell"/>
</dbReference>
<dbReference type="GO" id="GO:0009699">
    <property type="term" value="P:phenylpropanoid biosynthetic process"/>
    <property type="evidence" value="ECO:0007669"/>
    <property type="project" value="UniProtKB-ARBA"/>
</dbReference>
<dbReference type="Gene3D" id="2.40.480.10">
    <property type="entry name" value="Allene oxide cyclase-like"/>
    <property type="match status" value="1"/>
</dbReference>
<dbReference type="InterPro" id="IPR044859">
    <property type="entry name" value="Allene_oxi_cyc_Dirigent"/>
</dbReference>
<dbReference type="InterPro" id="IPR004265">
    <property type="entry name" value="Dirigent"/>
</dbReference>
<dbReference type="PANTHER" id="PTHR46442">
    <property type="entry name" value="DIRIGENT PROTEIN"/>
    <property type="match status" value="1"/>
</dbReference>
<dbReference type="PANTHER" id="PTHR46442:SF11">
    <property type="entry name" value="DIRIGENT PROTEIN 12-RELATED"/>
    <property type="match status" value="1"/>
</dbReference>
<dbReference type="Pfam" id="PF03018">
    <property type="entry name" value="Dirigent"/>
    <property type="match status" value="1"/>
</dbReference>